<proteinExistence type="evidence at protein level"/>
<protein>
    <recommendedName>
        <fullName>Histone H2A type 1-C</fullName>
    </recommendedName>
</protein>
<name>H2A1C_RAT</name>
<comment type="function">
    <text>Core component of nucleosome. Nucleosomes wrap and compact DNA into chromatin, limiting DNA accessibility to the cellular machineries which require DNA as a template. Histones thereby play a central role in transcription regulation, DNA repair, DNA replication and chromosomal stability. DNA accessibility is regulated via a complex set of post-translational modifications of histones, also called histone code, and nucleosome remodeling.</text>
</comment>
<comment type="subunit">
    <text>The nucleosome is a histone octamer containing two molecules each of H2A, H2B, H3 and H4 assembled in one H3-H4 heterotetramer and two H2A-H2B heterodimers. The octamer wraps approximately 147 bp of DNA.</text>
</comment>
<comment type="subcellular location">
    <subcellularLocation>
        <location>Nucleus</location>
    </subcellularLocation>
    <subcellularLocation>
        <location>Chromosome</location>
    </subcellularLocation>
</comment>
<comment type="PTM">
    <text evidence="4">Deiminated on Arg-4 in granulocytes upon calcium entry.</text>
</comment>
<comment type="PTM">
    <text evidence="4">Monoubiquitination of Lys-120 (H2AK119Ub) by RING1, TRIM37 and RNF2/RING2 complex gives a specific tag for epigenetic transcriptional repression and participates in X chromosome inactivation of female mammals. It is involved in the initiation of both imprinted and random X inactivation. Ubiquitinated H2A is enriched in inactive X chromosome chromatin. Ubiquitination of H2A functions downstream of methylation of 'Lys-27' of histone H3 (H3K27me). H2AK119Ub by RNF2/RING2 can also be induced by ultraviolet and may be involved in DNA repair. Following DNA double-strand breaks (DSBs), it is ubiquitinated through 'Lys-63' linkage of ubiquitin moieties by the E2 ligase UBE2N and the E3 ligases RNF8 and RNF168, leading to the recruitment of repair proteins to sites of DNA damage. Ubiquitination at Lys-14 and Lys-16 (H2AK13Ub and H2AK15Ub, respectively) in response to DNA damage is initiated by RNF168 that mediates monoubiquitination at these 2 sites, and 'Lys-63'-linked ubiquitin are then conjugated to monoubiquitin; RNF8 is able to extend 'Lys-63'-linked ubiquitin chains in vitro. H2AK119Ub and ionizing radiation-induced 'Lys-63'-linked ubiquitination (H2AK13Ub and H2AK15Ub) are distinct events.</text>
</comment>
<comment type="PTM">
    <text evidence="4">Phosphorylation on Ser-2 (H2AS1ph) is enhanced during mitosis. Phosphorylation on Ser-2 by RPS6KA5/MSK1 directly represses transcription. Acetylation of H3 inhibits Ser-2 phosphorylation by RPS6KA5/MSK1. Phosphorylation at Thr-121 (H2AT120ph) by DCAF1 is present in the regulatory region of many tumor suppresor genes and down-regulates their transcription.</text>
</comment>
<comment type="PTM">
    <text evidence="5">Symmetric dimethylation on Arg-4 by the PRDM1/PRMT5 complex may play a crucial role in the germ-cell lineage.</text>
</comment>
<comment type="PTM">
    <text evidence="4">Glutamine methylation at Gln-105 (H2AQ104me) by FBL is specifically dedicated to polymerase I. It is present at 35S ribosomal DNA locus and impairs binding of the FACT complex.</text>
</comment>
<comment type="PTM">
    <text evidence="4">Crotonylation (Kcr) is specifically present in male germ cells and marks testis-specific genes in post-meiotic cells, including X-linked genes that escape sex chromosome inactivation in haploid cells. Crotonylation marks active promoters and enhancers and confers resistance to transcriptional repressors. It is also associated with post-meiotically activated genes on autosomes.</text>
</comment>
<comment type="PTM">
    <text evidence="3">Lactylated in macrophages by EP300/P300 by using lactoyl-CoA directly derived from endogenous or exogenous lactate, leading to stimulates gene transcription.</text>
</comment>
<comment type="similarity">
    <text evidence="9">Belongs to the histone H2A family.</text>
</comment>
<dbReference type="SMR" id="P0C169"/>
<dbReference type="FunCoup" id="P0C169">
    <property type="interactions" value="1202"/>
</dbReference>
<dbReference type="IntAct" id="P0C169">
    <property type="interactions" value="1"/>
</dbReference>
<dbReference type="iPTMnet" id="P0C169"/>
<dbReference type="jPOST" id="P0C169"/>
<dbReference type="UCSC" id="RGD:1304905">
    <property type="organism name" value="rat"/>
</dbReference>
<dbReference type="RGD" id="1566374">
    <property type="gene designation" value="RGD1566374"/>
</dbReference>
<dbReference type="InParanoid" id="P0C169"/>
<dbReference type="PRO" id="PR:P0C169"/>
<dbReference type="Proteomes" id="UP000002494">
    <property type="component" value="Unplaced"/>
</dbReference>
<dbReference type="GO" id="GO:0000786">
    <property type="term" value="C:nucleosome"/>
    <property type="evidence" value="ECO:0000318"/>
    <property type="project" value="GO_Central"/>
</dbReference>
<dbReference type="GO" id="GO:0005634">
    <property type="term" value="C:nucleus"/>
    <property type="evidence" value="ECO:0000318"/>
    <property type="project" value="GO_Central"/>
</dbReference>
<dbReference type="GO" id="GO:0003677">
    <property type="term" value="F:DNA binding"/>
    <property type="evidence" value="ECO:0007669"/>
    <property type="project" value="UniProtKB-KW"/>
</dbReference>
<dbReference type="GO" id="GO:0046982">
    <property type="term" value="F:protein heterodimerization activity"/>
    <property type="evidence" value="ECO:0007669"/>
    <property type="project" value="InterPro"/>
</dbReference>
<dbReference type="GO" id="GO:0030527">
    <property type="term" value="F:structural constituent of chromatin"/>
    <property type="evidence" value="ECO:0000318"/>
    <property type="project" value="GO_Central"/>
</dbReference>
<dbReference type="GO" id="GO:0031507">
    <property type="term" value="P:heterochromatin formation"/>
    <property type="evidence" value="ECO:0000318"/>
    <property type="project" value="GO_Central"/>
</dbReference>
<dbReference type="CDD" id="cd00074">
    <property type="entry name" value="HFD_H2A"/>
    <property type="match status" value="1"/>
</dbReference>
<dbReference type="FunFam" id="1.10.20.10:FF:000103">
    <property type="entry name" value="Histone H2A type 1"/>
    <property type="match status" value="1"/>
</dbReference>
<dbReference type="Gene3D" id="1.10.20.10">
    <property type="entry name" value="Histone, subunit A"/>
    <property type="match status" value="1"/>
</dbReference>
<dbReference type="InterPro" id="IPR009072">
    <property type="entry name" value="Histone-fold"/>
</dbReference>
<dbReference type="InterPro" id="IPR002119">
    <property type="entry name" value="Histone_H2A"/>
</dbReference>
<dbReference type="InterPro" id="IPR007125">
    <property type="entry name" value="Histone_H2A/H2B/H3"/>
</dbReference>
<dbReference type="InterPro" id="IPR032454">
    <property type="entry name" value="Histone_H2A_C"/>
</dbReference>
<dbReference type="InterPro" id="IPR032458">
    <property type="entry name" value="Histone_H2A_CS"/>
</dbReference>
<dbReference type="PANTHER" id="PTHR23430">
    <property type="entry name" value="HISTONE H2A"/>
    <property type="match status" value="1"/>
</dbReference>
<dbReference type="Pfam" id="PF00125">
    <property type="entry name" value="Histone"/>
    <property type="match status" value="1"/>
</dbReference>
<dbReference type="Pfam" id="PF16211">
    <property type="entry name" value="Histone_H2A_C"/>
    <property type="match status" value="1"/>
</dbReference>
<dbReference type="PRINTS" id="PR00620">
    <property type="entry name" value="HISTONEH2A"/>
</dbReference>
<dbReference type="SMART" id="SM00414">
    <property type="entry name" value="H2A"/>
    <property type="match status" value="1"/>
</dbReference>
<dbReference type="SUPFAM" id="SSF47113">
    <property type="entry name" value="Histone-fold"/>
    <property type="match status" value="1"/>
</dbReference>
<dbReference type="PROSITE" id="PS00046">
    <property type="entry name" value="HISTONE_H2A"/>
    <property type="match status" value="1"/>
</dbReference>
<sequence length="130" mass="14105">MSGRGKQGGKARAKAKSRSSRAGLQFPVGRVHRLLRKGNYAERVGAGAPVYLAAVLEYLTAEILELAGNAARDNKKTRIIPRHLQLAIRNDEELNKLLGRVTIAQGGVLPNIQAVLLPKKTESHHKAKGK</sequence>
<keyword id="KW-0007">Acetylation</keyword>
<keyword id="KW-0158">Chromosome</keyword>
<keyword id="KW-0164">Citrullination</keyword>
<keyword id="KW-0903">Direct protein sequencing</keyword>
<keyword id="KW-0238">DNA-binding</keyword>
<keyword id="KW-0379">Hydroxylation</keyword>
<keyword id="KW-1017">Isopeptide bond</keyword>
<keyword id="KW-0488">Methylation</keyword>
<keyword id="KW-0544">Nucleosome core</keyword>
<keyword id="KW-0539">Nucleus</keyword>
<keyword id="KW-0597">Phosphoprotein</keyword>
<keyword id="KW-1185">Reference proteome</keyword>
<keyword id="KW-0832">Ubl conjugation</keyword>
<feature type="initiator methionine" description="Removed" evidence="8">
    <location>
        <position position="1"/>
    </location>
</feature>
<feature type="chain" id="PRO_0000227510" description="Histone H2A type 1-C">
    <location>
        <begin position="2"/>
        <end position="130"/>
    </location>
</feature>
<feature type="region of interest" description="Disordered" evidence="7">
    <location>
        <begin position="1"/>
        <end position="22"/>
    </location>
</feature>
<feature type="compositionally biased region" description="Basic residues" evidence="7">
    <location>
        <begin position="7"/>
        <end position="19"/>
    </location>
</feature>
<feature type="modified residue" description="N-acetylserine" evidence="8">
    <location>
        <position position="2"/>
    </location>
</feature>
<feature type="modified residue" description="Phosphoserine; by RPS6KA5" evidence="6">
    <location>
        <position position="2"/>
    </location>
</feature>
<feature type="modified residue" description="Citrulline; alternate" evidence="4">
    <location>
        <position position="4"/>
    </location>
</feature>
<feature type="modified residue" description="Symmetric dimethylarginine; by PRMT5; alternate" evidence="2">
    <location>
        <position position="4"/>
    </location>
</feature>
<feature type="modified residue" description="N6-(2-hydroxyisobutyryl)lysine; alternate" evidence="4">
    <location>
        <position position="6"/>
    </location>
</feature>
<feature type="modified residue" description="N6-acetyllysine; alternate" evidence="2">
    <location>
        <position position="6"/>
    </location>
</feature>
<feature type="modified residue" description="N6-(2-hydroxyisobutyryl)lysine; alternate" evidence="4">
    <location>
        <position position="10"/>
    </location>
</feature>
<feature type="modified residue" description="N6-lactoyllysine; alternate" evidence="3">
    <location>
        <position position="10"/>
    </location>
</feature>
<feature type="modified residue" description="N6-succinyllysine; alternate" evidence="6">
    <location>
        <position position="10"/>
    </location>
</feature>
<feature type="modified residue" description="N6-(2-hydroxyisobutyryl)lysine; alternate" evidence="4">
    <location>
        <position position="37"/>
    </location>
</feature>
<feature type="modified residue" description="N6-(beta-hydroxybutyryl)lysine; alternate" evidence="1">
    <location>
        <position position="37"/>
    </location>
</feature>
<feature type="modified residue" description="N6-crotonyllysine; alternate" evidence="4">
    <location>
        <position position="37"/>
    </location>
</feature>
<feature type="modified residue" description="N6-(2-hydroxyisobutyryl)lysine" evidence="4">
    <location>
        <position position="75"/>
    </location>
</feature>
<feature type="modified residue" description="N6-(2-hydroxyisobutyryl)lysine" evidence="4">
    <location>
        <position position="76"/>
    </location>
</feature>
<feature type="modified residue" description="N6-(2-hydroxyisobutyryl)lysine; alternate" evidence="4">
    <location>
        <position position="96"/>
    </location>
</feature>
<feature type="modified residue" description="N6-glutaryllysine; alternate" evidence="4">
    <location>
        <position position="96"/>
    </location>
</feature>
<feature type="modified residue" description="N6-succinyllysine; alternate" evidence="6">
    <location>
        <position position="96"/>
    </location>
</feature>
<feature type="modified residue" description="N5-methylglutamine" evidence="4">
    <location>
        <position position="105"/>
    </location>
</feature>
<feature type="modified residue" description="N6-(2-hydroxyisobutyryl)lysine; alternate" evidence="4">
    <location>
        <position position="119"/>
    </location>
</feature>
<feature type="modified residue" description="N6-crotonyllysine; alternate" evidence="4">
    <location>
        <position position="119"/>
    </location>
</feature>
<feature type="modified residue" description="N6-glutaryllysine; alternate" evidence="4">
    <location>
        <position position="119"/>
    </location>
</feature>
<feature type="modified residue" description="N6-crotonyllysine; alternate" evidence="4">
    <location>
        <position position="120"/>
    </location>
</feature>
<feature type="modified residue" description="N6-glutaryllysine; alternate" evidence="4">
    <location>
        <position position="120"/>
    </location>
</feature>
<feature type="modified residue" description="Phosphothreonine; by DCAF1" evidence="6">
    <location>
        <position position="121"/>
    </location>
</feature>
<feature type="modified residue" description="N6-crotonyllysine; alternate" evidence="4">
    <location>
        <position position="126"/>
    </location>
</feature>
<feature type="modified residue" description="N6-glutaryllysine; alternate" evidence="4">
    <location>
        <position position="126"/>
    </location>
</feature>
<feature type="cross-link" description="Glycyl lysine isopeptide (Lys-Gly) (interchain with G-Cter in ubiquitin)" evidence="6">
    <location>
        <position position="14"/>
    </location>
</feature>
<feature type="cross-link" description="Glycyl lysine isopeptide (Lys-Gly) (interchain with G-Cter in ubiquitin)" evidence="6">
    <location>
        <position position="16"/>
    </location>
</feature>
<feature type="cross-link" description="Glycyl lysine isopeptide (Lys-Gly) (interchain with G-Cter in ubiquitin); alternate" evidence="6">
    <location>
        <position position="120"/>
    </location>
</feature>
<organism>
    <name type="scientific">Rattus norvegicus</name>
    <name type="common">Rat</name>
    <dbReference type="NCBI Taxonomy" id="10116"/>
    <lineage>
        <taxon>Eukaryota</taxon>
        <taxon>Metazoa</taxon>
        <taxon>Chordata</taxon>
        <taxon>Craniata</taxon>
        <taxon>Vertebrata</taxon>
        <taxon>Euteleostomi</taxon>
        <taxon>Mammalia</taxon>
        <taxon>Eutheria</taxon>
        <taxon>Euarchontoglires</taxon>
        <taxon>Glires</taxon>
        <taxon>Rodentia</taxon>
        <taxon>Myomorpha</taxon>
        <taxon>Muroidea</taxon>
        <taxon>Muridae</taxon>
        <taxon>Murinae</taxon>
        <taxon>Rattus</taxon>
    </lineage>
</organism>
<reference key="1">
    <citation type="journal article" date="1976" name="Biochemistry">
        <title>Primary structure and microheterogeneities of rat chloroleukemia histone H2A (histone ALK, IIbl or F2a2).</title>
        <authorList>
            <person name="Laine B."/>
            <person name="Sautiere P."/>
            <person name="Biserte G."/>
        </authorList>
    </citation>
    <scope>PROTEIN SEQUENCE OF 2-130</scope>
    <scope>CLEAVAGE OF INITIATOR METHIONINE</scope>
    <scope>ACETYLATION AT SER-2</scope>
    <source>
        <tissue>Leukemia</tissue>
    </source>
</reference>
<evidence type="ECO:0000250" key="1">
    <source>
        <dbReference type="UniProtKB" id="C0HKE1"/>
    </source>
</evidence>
<evidence type="ECO:0000250" key="2">
    <source>
        <dbReference type="UniProtKB" id="C0HKE2"/>
    </source>
</evidence>
<evidence type="ECO:0000250" key="3">
    <source>
        <dbReference type="UniProtKB" id="P0C0S5"/>
    </source>
</evidence>
<evidence type="ECO:0000250" key="4">
    <source>
        <dbReference type="UniProtKB" id="P0C0S8"/>
    </source>
</evidence>
<evidence type="ECO:0000250" key="5">
    <source>
        <dbReference type="UniProtKB" id="P22752"/>
    </source>
</evidence>
<evidence type="ECO:0000250" key="6">
    <source>
        <dbReference type="UniProtKB" id="Q93077"/>
    </source>
</evidence>
<evidence type="ECO:0000256" key="7">
    <source>
        <dbReference type="SAM" id="MobiDB-lite"/>
    </source>
</evidence>
<evidence type="ECO:0000269" key="8">
    <source>
    </source>
</evidence>
<evidence type="ECO:0000305" key="9"/>
<accession>P0C169</accession>